<proteinExistence type="inferred from homology"/>
<organism>
    <name type="scientific">Anoxybacillus flavithermus (strain DSM 21510 / WK1)</name>
    <dbReference type="NCBI Taxonomy" id="491915"/>
    <lineage>
        <taxon>Bacteria</taxon>
        <taxon>Bacillati</taxon>
        <taxon>Bacillota</taxon>
        <taxon>Bacilli</taxon>
        <taxon>Bacillales</taxon>
        <taxon>Anoxybacillaceae</taxon>
        <taxon>Anoxybacillus</taxon>
    </lineage>
</organism>
<accession>B7GK26</accession>
<comment type="function">
    <text evidence="1">Could be involved in insertion of integral membrane proteins into the membrane.</text>
</comment>
<comment type="subcellular location">
    <subcellularLocation>
        <location evidence="1">Cell membrane</location>
        <topology evidence="1">Peripheral membrane protein</topology>
        <orientation evidence="1">Cytoplasmic side</orientation>
    </subcellularLocation>
</comment>
<comment type="similarity">
    <text evidence="1">Belongs to the UPF0161 family.</text>
</comment>
<dbReference type="EMBL" id="CP000922">
    <property type="protein sequence ID" value="ACJ32782.1"/>
    <property type="molecule type" value="Genomic_DNA"/>
</dbReference>
<dbReference type="STRING" id="491915.Aflv_0398"/>
<dbReference type="GeneID" id="7036655"/>
<dbReference type="KEGG" id="afl:Aflv_0398"/>
<dbReference type="eggNOG" id="COG0759">
    <property type="taxonomic scope" value="Bacteria"/>
</dbReference>
<dbReference type="HOGENOM" id="CLU_144811_6_0_9"/>
<dbReference type="Proteomes" id="UP000000742">
    <property type="component" value="Chromosome"/>
</dbReference>
<dbReference type="GO" id="GO:0005886">
    <property type="term" value="C:plasma membrane"/>
    <property type="evidence" value="ECO:0007669"/>
    <property type="project" value="UniProtKB-SubCell"/>
</dbReference>
<dbReference type="HAMAP" id="MF_00386">
    <property type="entry name" value="UPF0161_YidD"/>
    <property type="match status" value="1"/>
</dbReference>
<dbReference type="InterPro" id="IPR002696">
    <property type="entry name" value="Membr_insert_effic_factor_YidD"/>
</dbReference>
<dbReference type="NCBIfam" id="TIGR00278">
    <property type="entry name" value="membrane protein insertion efficiency factor YidD"/>
    <property type="match status" value="1"/>
</dbReference>
<dbReference type="PANTHER" id="PTHR33383">
    <property type="entry name" value="MEMBRANE PROTEIN INSERTION EFFICIENCY FACTOR-RELATED"/>
    <property type="match status" value="1"/>
</dbReference>
<dbReference type="PANTHER" id="PTHR33383:SF1">
    <property type="entry name" value="MEMBRANE PROTEIN INSERTION EFFICIENCY FACTOR-RELATED"/>
    <property type="match status" value="1"/>
</dbReference>
<dbReference type="Pfam" id="PF01809">
    <property type="entry name" value="YidD"/>
    <property type="match status" value="1"/>
</dbReference>
<dbReference type="SMART" id="SM01234">
    <property type="entry name" value="Haemolytic"/>
    <property type="match status" value="1"/>
</dbReference>
<keyword id="KW-1003">Cell membrane</keyword>
<keyword id="KW-0472">Membrane</keyword>
<evidence type="ECO:0000255" key="1">
    <source>
        <dbReference type="HAMAP-Rule" id="MF_00386"/>
    </source>
</evidence>
<name>YIDD_ANOFW</name>
<sequence length="74" mass="8705">MKHIFILLIRFYQRFISPLKPPTCRFYPTCSHYGLEAIRRFGALKGGYLTIKRILKCHPFHPGGFDPVPEKEQK</sequence>
<feature type="chain" id="PRO_1000122613" description="Putative membrane protein insertion efficiency factor">
    <location>
        <begin position="1"/>
        <end position="74"/>
    </location>
</feature>
<reference key="1">
    <citation type="journal article" date="2008" name="Genome Biol.">
        <title>Encapsulated in silica: genome, proteome and physiology of the thermophilic bacterium Anoxybacillus flavithermus WK1.</title>
        <authorList>
            <person name="Saw J.H."/>
            <person name="Mountain B.W."/>
            <person name="Feng L."/>
            <person name="Omelchenko M.V."/>
            <person name="Hou S."/>
            <person name="Saito J.A."/>
            <person name="Stott M.B."/>
            <person name="Li D."/>
            <person name="Zhao G."/>
            <person name="Wu J."/>
            <person name="Galperin M.Y."/>
            <person name="Koonin E.V."/>
            <person name="Makarova K.S."/>
            <person name="Wolf Y.I."/>
            <person name="Rigden D.J."/>
            <person name="Dunfield P.F."/>
            <person name="Wang L."/>
            <person name="Alam M."/>
        </authorList>
    </citation>
    <scope>NUCLEOTIDE SEQUENCE [LARGE SCALE GENOMIC DNA]</scope>
    <source>
        <strain>DSM 21510 / WK1</strain>
    </source>
</reference>
<gene>
    <name type="ordered locus">Aflv_0398</name>
</gene>
<protein>
    <recommendedName>
        <fullName evidence="1">Putative membrane protein insertion efficiency factor</fullName>
    </recommendedName>
</protein>